<sequence>MPDNTIRSNSEVVLIGAGIMSATLGLILKELQPDIKIEIYERLDVAAAESSDAWNNAGTGHSAFCELNYTPEKADGSIDPKKAISIAESFEISRQFWSYLVQQNKVPSPENFIKSVPHMSFVWGDKNVEYLRKRFEALQSNPIFADMTFSTDFNQLKEWMPLVMEGREADEKLAATHMEIGTDVNFGALTRSMFNYLEKLDGVTLYFNHEVKKLKQREDKSWRIKITDLSTGQKRKAYTKFVFIGAGGGSLPLLEKADVPEGHGYGGFPVSGQWLKCTNPEVIAKHQAKVYGKASVGAPPMSVPHIDTRVIDGEKALLFGPFAGFSTRFLKNGSYLDLPLSIKANNLIPMLSAGFHNIPLTKYLIEQVRQSPKDRMKALREYLPTARSKDWKLEKAGQRVQVIKKGKDGGGVLEFGTEVINTHDGTLAVLLGASPGASTAVAIMVDLISRCFTNQIKTPEWEAKMKEMIPSYGKTLNDKPELLAEMRKHTAEVLKIK</sequence>
<accession>A5FGX2</accession>
<dbReference type="EC" id="1.1.5.4" evidence="1"/>
<dbReference type="EMBL" id="CP000685">
    <property type="protein sequence ID" value="ABQ05556.1"/>
    <property type="molecule type" value="Genomic_DNA"/>
</dbReference>
<dbReference type="RefSeq" id="WP_012024595.1">
    <property type="nucleotide sequence ID" value="NC_009441.1"/>
</dbReference>
<dbReference type="SMR" id="A5FGX2"/>
<dbReference type="STRING" id="376686.Fjoh_2529"/>
<dbReference type="KEGG" id="fjo:Fjoh_2529"/>
<dbReference type="eggNOG" id="COG0579">
    <property type="taxonomic scope" value="Bacteria"/>
</dbReference>
<dbReference type="HOGENOM" id="CLU_028151_0_0_10"/>
<dbReference type="OrthoDB" id="9763983at2"/>
<dbReference type="UniPathway" id="UPA00223">
    <property type="reaction ID" value="UER01008"/>
</dbReference>
<dbReference type="Proteomes" id="UP000006694">
    <property type="component" value="Chromosome"/>
</dbReference>
<dbReference type="GO" id="GO:0047545">
    <property type="term" value="F:2-hydroxyglutarate dehydrogenase activity"/>
    <property type="evidence" value="ECO:0007669"/>
    <property type="project" value="TreeGrafter"/>
</dbReference>
<dbReference type="GO" id="GO:0008924">
    <property type="term" value="F:L-malate dehydrogenase (quinone) activity"/>
    <property type="evidence" value="ECO:0007669"/>
    <property type="project" value="UniProtKB-UniRule"/>
</dbReference>
<dbReference type="GO" id="GO:0006099">
    <property type="term" value="P:tricarboxylic acid cycle"/>
    <property type="evidence" value="ECO:0007669"/>
    <property type="project" value="UniProtKB-UniRule"/>
</dbReference>
<dbReference type="Gene3D" id="3.30.9.10">
    <property type="entry name" value="D-Amino Acid Oxidase, subunit A, domain 2"/>
    <property type="match status" value="1"/>
</dbReference>
<dbReference type="Gene3D" id="3.50.50.60">
    <property type="entry name" value="FAD/NAD(P)-binding domain"/>
    <property type="match status" value="1"/>
</dbReference>
<dbReference type="HAMAP" id="MF_00212">
    <property type="entry name" value="MQO"/>
    <property type="match status" value="1"/>
</dbReference>
<dbReference type="InterPro" id="IPR036188">
    <property type="entry name" value="FAD/NAD-bd_sf"/>
</dbReference>
<dbReference type="InterPro" id="IPR006231">
    <property type="entry name" value="MQO"/>
</dbReference>
<dbReference type="NCBIfam" id="TIGR01320">
    <property type="entry name" value="mal_quin_oxido"/>
    <property type="match status" value="1"/>
</dbReference>
<dbReference type="NCBIfam" id="NF003603">
    <property type="entry name" value="PRK05257.1-1"/>
    <property type="match status" value="1"/>
</dbReference>
<dbReference type="NCBIfam" id="NF003604">
    <property type="entry name" value="PRK05257.1-3"/>
    <property type="match status" value="1"/>
</dbReference>
<dbReference type="NCBIfam" id="NF003605">
    <property type="entry name" value="PRK05257.1-4"/>
    <property type="match status" value="1"/>
</dbReference>
<dbReference type="NCBIfam" id="NF003606">
    <property type="entry name" value="PRK05257.2-1"/>
    <property type="match status" value="1"/>
</dbReference>
<dbReference type="NCBIfam" id="NF003608">
    <property type="entry name" value="PRK05257.2-4"/>
    <property type="match status" value="1"/>
</dbReference>
<dbReference type="NCBIfam" id="NF003609">
    <property type="entry name" value="PRK05257.2-5"/>
    <property type="match status" value="1"/>
</dbReference>
<dbReference type="NCBIfam" id="NF003611">
    <property type="entry name" value="PRK05257.3-2"/>
    <property type="match status" value="1"/>
</dbReference>
<dbReference type="NCBIfam" id="NF003612">
    <property type="entry name" value="PRK05257.3-3"/>
    <property type="match status" value="1"/>
</dbReference>
<dbReference type="NCBIfam" id="NF003613">
    <property type="entry name" value="PRK05257.3-4"/>
    <property type="match status" value="1"/>
</dbReference>
<dbReference type="NCBIfam" id="NF003614">
    <property type="entry name" value="PRK05257.3-5"/>
    <property type="match status" value="1"/>
</dbReference>
<dbReference type="NCBIfam" id="NF009875">
    <property type="entry name" value="PRK13339.1"/>
    <property type="match status" value="1"/>
</dbReference>
<dbReference type="PANTHER" id="PTHR43104">
    <property type="entry name" value="L-2-HYDROXYGLUTARATE DEHYDROGENASE, MITOCHONDRIAL"/>
    <property type="match status" value="1"/>
</dbReference>
<dbReference type="PANTHER" id="PTHR43104:SF2">
    <property type="entry name" value="L-2-HYDROXYGLUTARATE DEHYDROGENASE, MITOCHONDRIAL"/>
    <property type="match status" value="1"/>
</dbReference>
<dbReference type="Pfam" id="PF06039">
    <property type="entry name" value="Mqo"/>
    <property type="match status" value="1"/>
</dbReference>
<dbReference type="SUPFAM" id="SSF51905">
    <property type="entry name" value="FAD/NAD(P)-binding domain"/>
    <property type="match status" value="1"/>
</dbReference>
<feature type="chain" id="PRO_1000204199" description="Probable malate:quinone oxidoreductase">
    <location>
        <begin position="1"/>
        <end position="497"/>
    </location>
</feature>
<reference key="1">
    <citation type="journal article" date="2009" name="Appl. Environ. Microbiol.">
        <title>Novel features of the polysaccharide-digesting gliding bacterium Flavobacterium johnsoniae as revealed by genome sequence analysis.</title>
        <authorList>
            <person name="McBride M.J."/>
            <person name="Xie G."/>
            <person name="Martens E.C."/>
            <person name="Lapidus A."/>
            <person name="Henrissat B."/>
            <person name="Rhodes R.G."/>
            <person name="Goltsman E."/>
            <person name="Wang W."/>
            <person name="Xu J."/>
            <person name="Hunnicutt D.W."/>
            <person name="Staroscik A.M."/>
            <person name="Hoover T.R."/>
            <person name="Cheng Y.Q."/>
            <person name="Stein J.L."/>
        </authorList>
    </citation>
    <scope>NUCLEOTIDE SEQUENCE [LARGE SCALE GENOMIC DNA]</scope>
    <source>
        <strain>ATCC 17061 / DSM 2064 / JCM 8514 / BCRC 14874 / CCUG 350202 / NBRC 14942 / NCIMB 11054 / UW101</strain>
    </source>
</reference>
<proteinExistence type="inferred from homology"/>
<keyword id="KW-0274">FAD</keyword>
<keyword id="KW-0285">Flavoprotein</keyword>
<keyword id="KW-0560">Oxidoreductase</keyword>
<keyword id="KW-0816">Tricarboxylic acid cycle</keyword>
<evidence type="ECO:0000255" key="1">
    <source>
        <dbReference type="HAMAP-Rule" id="MF_00212"/>
    </source>
</evidence>
<organism>
    <name type="scientific">Flavobacterium johnsoniae (strain ATCC 17061 / DSM 2064 / JCM 8514 / BCRC 14874 / CCUG 350202 / NBRC 14942 / NCIMB 11054 / UW101)</name>
    <name type="common">Cytophaga johnsonae</name>
    <dbReference type="NCBI Taxonomy" id="376686"/>
    <lineage>
        <taxon>Bacteria</taxon>
        <taxon>Pseudomonadati</taxon>
        <taxon>Bacteroidota</taxon>
        <taxon>Flavobacteriia</taxon>
        <taxon>Flavobacteriales</taxon>
        <taxon>Flavobacteriaceae</taxon>
        <taxon>Flavobacterium</taxon>
    </lineage>
</organism>
<protein>
    <recommendedName>
        <fullName evidence="1">Probable malate:quinone oxidoreductase</fullName>
        <ecNumber evidence="1">1.1.5.4</ecNumber>
    </recommendedName>
    <alternativeName>
        <fullName evidence="1">MQO</fullName>
    </alternativeName>
    <alternativeName>
        <fullName evidence="1">Malate dehydrogenase [quinone]</fullName>
    </alternativeName>
</protein>
<comment type="catalytic activity">
    <reaction evidence="1">
        <text>(S)-malate + a quinone = a quinol + oxaloacetate</text>
        <dbReference type="Rhea" id="RHEA:46012"/>
        <dbReference type="ChEBI" id="CHEBI:15589"/>
        <dbReference type="ChEBI" id="CHEBI:16452"/>
        <dbReference type="ChEBI" id="CHEBI:24646"/>
        <dbReference type="ChEBI" id="CHEBI:132124"/>
        <dbReference type="EC" id="1.1.5.4"/>
    </reaction>
</comment>
<comment type="cofactor">
    <cofactor evidence="1">
        <name>FAD</name>
        <dbReference type="ChEBI" id="CHEBI:57692"/>
    </cofactor>
</comment>
<comment type="pathway">
    <text evidence="1">Carbohydrate metabolism; tricarboxylic acid cycle; oxaloacetate from (S)-malate (quinone route): step 1/1.</text>
</comment>
<comment type="similarity">
    <text evidence="1">Belongs to the MQO family.</text>
</comment>
<name>MQO_FLAJ1</name>
<gene>
    <name evidence="1" type="primary">mqo</name>
    <name type="ordered locus">Fjoh_2529</name>
</gene>